<sequence>MPARAAGAGVELSRLSAFKPDLYHRAWSSIPHPTLPLIATAHEKSVTVFSLSTLSAHSNLTGGHTRSVRCAVWKPNLPSGKLCLVTASFDSTAGLWRWEGDVPLEEGTKKGESTEIDVTRRRNNNDSDKDNDDDWEFTLVLEGHENEIKSAAFSPSGQYLATCSRDKSIWIWEDVGANEGDDEWETVAVLTEHDGDVKCVAWCPDVPGRNISSYSPDVLASASYDDTIRIWREDGDGEWACVAVLEGHSSTVWGVQWEPKVDNTKFPRLISWSADKTIRVWTLEQDDPEASLSQPGAVQSPFKSGLGGIPNTMRRTLKEEWRCSAVLPSVHTRDIYSASWSKNGRVASTGSDGSILVYEECAPSNPSTTPADLEEGDSNVIVKPGEAKWKVLGKVSDGHGPYEINHITWCSRYDAGVEQRGVEEMLVTTGDDGIVQAWQLKESIEL</sequence>
<organism>
    <name type="scientific">Pyricularia oryzae (strain 70-15 / ATCC MYA-4617 / FGSC 8958)</name>
    <name type="common">Rice blast fungus</name>
    <name type="synonym">Magnaporthe oryzae</name>
    <dbReference type="NCBI Taxonomy" id="242507"/>
    <lineage>
        <taxon>Eukaryota</taxon>
        <taxon>Fungi</taxon>
        <taxon>Dikarya</taxon>
        <taxon>Ascomycota</taxon>
        <taxon>Pezizomycotina</taxon>
        <taxon>Sordariomycetes</taxon>
        <taxon>Sordariomycetidae</taxon>
        <taxon>Magnaporthales</taxon>
        <taxon>Pyriculariaceae</taxon>
        <taxon>Pyricularia</taxon>
    </lineage>
</organism>
<accession>A4R7U3</accession>
<accession>G4NAT4</accession>
<comment type="function">
    <text evidence="1">Essential component of the cytosolic iron-sulfur (Fe/S) protein assembly machinery. Required for the maturation of extramitochondrial Fe/S proteins.</text>
</comment>
<comment type="similarity">
    <text evidence="1">Belongs to the WD repeat CIA1 family.</text>
</comment>
<dbReference type="EMBL" id="CM001234">
    <property type="protein sequence ID" value="EHA50526.1"/>
    <property type="molecule type" value="Genomic_DNA"/>
</dbReference>
<dbReference type="RefSeq" id="XP_003716845.1">
    <property type="nucleotide sequence ID" value="XM_003716797.1"/>
</dbReference>
<dbReference type="SMR" id="A4R7U3"/>
<dbReference type="STRING" id="242507.A4R7U3"/>
<dbReference type="GeneID" id="2676736"/>
<dbReference type="KEGG" id="mgr:MGG_03150"/>
<dbReference type="VEuPathDB" id="FungiDB:MGG_03150"/>
<dbReference type="eggNOG" id="KOG0645">
    <property type="taxonomic scope" value="Eukaryota"/>
</dbReference>
<dbReference type="HOGENOM" id="CLU_000288_57_8_1"/>
<dbReference type="InParanoid" id="A4R7U3"/>
<dbReference type="OMA" id="IREIRWS"/>
<dbReference type="OrthoDB" id="284782at2759"/>
<dbReference type="Proteomes" id="UP000009058">
    <property type="component" value="Chromosome 4"/>
</dbReference>
<dbReference type="GO" id="GO:0097361">
    <property type="term" value="C:cytosolic [4Fe-4S] assembly targeting complex"/>
    <property type="evidence" value="ECO:0007669"/>
    <property type="project" value="InterPro"/>
</dbReference>
<dbReference type="GO" id="GO:0016226">
    <property type="term" value="P:iron-sulfur cluster assembly"/>
    <property type="evidence" value="ECO:0007669"/>
    <property type="project" value="UniProtKB-UniRule"/>
</dbReference>
<dbReference type="Gene3D" id="2.130.10.10">
    <property type="entry name" value="YVTN repeat-like/Quinoprotein amine dehydrogenase"/>
    <property type="match status" value="1"/>
</dbReference>
<dbReference type="HAMAP" id="MF_03037">
    <property type="entry name" value="ciao1"/>
    <property type="match status" value="1"/>
</dbReference>
<dbReference type="InterPro" id="IPR028608">
    <property type="entry name" value="CIAO1/Cia1"/>
</dbReference>
<dbReference type="InterPro" id="IPR020472">
    <property type="entry name" value="G-protein_beta_WD-40_rep"/>
</dbReference>
<dbReference type="InterPro" id="IPR015943">
    <property type="entry name" value="WD40/YVTN_repeat-like_dom_sf"/>
</dbReference>
<dbReference type="InterPro" id="IPR036322">
    <property type="entry name" value="WD40_repeat_dom_sf"/>
</dbReference>
<dbReference type="InterPro" id="IPR001680">
    <property type="entry name" value="WD40_rpt"/>
</dbReference>
<dbReference type="PANTHER" id="PTHR19920:SF0">
    <property type="entry name" value="CYTOSOLIC IRON-SULFUR PROTEIN ASSEMBLY PROTEIN CIAO1-RELATED"/>
    <property type="match status" value="1"/>
</dbReference>
<dbReference type="PANTHER" id="PTHR19920">
    <property type="entry name" value="WD40 PROTEIN CIAO1"/>
    <property type="match status" value="1"/>
</dbReference>
<dbReference type="Pfam" id="PF00400">
    <property type="entry name" value="WD40"/>
    <property type="match status" value="5"/>
</dbReference>
<dbReference type="PRINTS" id="PR00320">
    <property type="entry name" value="GPROTEINBRPT"/>
</dbReference>
<dbReference type="SMART" id="SM00320">
    <property type="entry name" value="WD40"/>
    <property type="match status" value="6"/>
</dbReference>
<dbReference type="SUPFAM" id="SSF50978">
    <property type="entry name" value="WD40 repeat-like"/>
    <property type="match status" value="1"/>
</dbReference>
<dbReference type="PROSITE" id="PS50082">
    <property type="entry name" value="WD_REPEATS_2"/>
    <property type="match status" value="3"/>
</dbReference>
<dbReference type="PROSITE" id="PS50294">
    <property type="entry name" value="WD_REPEATS_REGION"/>
    <property type="match status" value="1"/>
</dbReference>
<reference key="1">
    <citation type="journal article" date="2005" name="Nature">
        <title>The genome sequence of the rice blast fungus Magnaporthe grisea.</title>
        <authorList>
            <person name="Dean R.A."/>
            <person name="Talbot N.J."/>
            <person name="Ebbole D.J."/>
            <person name="Farman M.L."/>
            <person name="Mitchell T.K."/>
            <person name="Orbach M.J."/>
            <person name="Thon M.R."/>
            <person name="Kulkarni R."/>
            <person name="Xu J.-R."/>
            <person name="Pan H."/>
            <person name="Read N.D."/>
            <person name="Lee Y.-H."/>
            <person name="Carbone I."/>
            <person name="Brown D."/>
            <person name="Oh Y.Y."/>
            <person name="Donofrio N."/>
            <person name="Jeong J.S."/>
            <person name="Soanes D.M."/>
            <person name="Djonovic S."/>
            <person name="Kolomiets E."/>
            <person name="Rehmeyer C."/>
            <person name="Li W."/>
            <person name="Harding M."/>
            <person name="Kim S."/>
            <person name="Lebrun M.-H."/>
            <person name="Bohnert H."/>
            <person name="Coughlan S."/>
            <person name="Butler J."/>
            <person name="Calvo S.E."/>
            <person name="Ma L.-J."/>
            <person name="Nicol R."/>
            <person name="Purcell S."/>
            <person name="Nusbaum C."/>
            <person name="Galagan J.E."/>
            <person name="Birren B.W."/>
        </authorList>
    </citation>
    <scope>NUCLEOTIDE SEQUENCE [LARGE SCALE GENOMIC DNA]</scope>
    <source>
        <strain>70-15 / ATCC MYA-4617 / FGSC 8958</strain>
    </source>
</reference>
<feature type="chain" id="PRO_0000382518" description="Probable cytosolic iron-sulfur protein assembly protein 1">
    <location>
        <begin position="1"/>
        <end position="446"/>
    </location>
</feature>
<feature type="repeat" description="WD 1">
    <location>
        <begin position="17"/>
        <end position="59"/>
    </location>
</feature>
<feature type="repeat" description="WD 2">
    <location>
        <begin position="63"/>
        <end position="106"/>
    </location>
</feature>
<feature type="repeat" description="WD 3">
    <location>
        <begin position="143"/>
        <end position="182"/>
    </location>
</feature>
<feature type="repeat" description="WD 4">
    <location>
        <begin position="192"/>
        <end position="241"/>
    </location>
</feature>
<feature type="repeat" description="WD 5">
    <location>
        <begin position="247"/>
        <end position="291"/>
    </location>
</feature>
<feature type="repeat" description="WD 6">
    <location>
        <begin position="330"/>
        <end position="368"/>
    </location>
</feature>
<feature type="repeat" description="WD 7">
    <location>
        <begin position="398"/>
        <end position="446"/>
    </location>
</feature>
<feature type="region of interest" description="Disordered" evidence="2">
    <location>
        <begin position="106"/>
        <end position="133"/>
    </location>
</feature>
<feature type="compositionally biased region" description="Basic and acidic residues" evidence="2">
    <location>
        <begin position="106"/>
        <end position="128"/>
    </location>
</feature>
<keyword id="KW-1185">Reference proteome</keyword>
<keyword id="KW-0677">Repeat</keyword>
<keyword id="KW-0853">WD repeat</keyword>
<gene>
    <name evidence="1" type="primary">CIA1</name>
    <name type="ORF">MGG_03150</name>
</gene>
<evidence type="ECO:0000255" key="1">
    <source>
        <dbReference type="HAMAP-Rule" id="MF_03037"/>
    </source>
</evidence>
<evidence type="ECO:0000256" key="2">
    <source>
        <dbReference type="SAM" id="MobiDB-lite"/>
    </source>
</evidence>
<name>CIAO1_PYRO7</name>
<protein>
    <recommendedName>
        <fullName evidence="1">Probable cytosolic iron-sulfur protein assembly protein 1</fullName>
    </recommendedName>
</protein>
<proteinExistence type="inferred from homology"/>